<accession>Q19329</accession>
<comment type="function">
    <text evidence="1">Required during maturation of the 40S ribosomal subunit in the nucleolus.</text>
</comment>
<comment type="subcellular location">
    <subcellularLocation>
        <location evidence="1">Nucleus</location>
        <location evidence="1">Nucleolus</location>
    </subcellularLocation>
</comment>
<comment type="similarity">
    <text evidence="4">Belongs to the TRAFAC class translation factor GTPase superfamily. Bms1-like GTPase family. TSR1 subfamily.</text>
</comment>
<feature type="chain" id="PRO_0000311279" description="Pre-rRNA-processing protein TSR1 homolog">
    <location>
        <begin position="1"/>
        <end position="785"/>
    </location>
</feature>
<feature type="domain" description="Bms1-type G" evidence="2">
    <location>
        <begin position="83"/>
        <end position="243"/>
    </location>
</feature>
<feature type="region of interest" description="Disordered" evidence="3">
    <location>
        <begin position="1"/>
        <end position="59"/>
    </location>
</feature>
<feature type="region of interest" description="Disordered" evidence="3">
    <location>
        <begin position="307"/>
        <end position="426"/>
    </location>
</feature>
<feature type="compositionally biased region" description="Basic residues" evidence="3">
    <location>
        <begin position="9"/>
        <end position="25"/>
    </location>
</feature>
<feature type="compositionally biased region" description="Basic and acidic residues" evidence="3">
    <location>
        <begin position="26"/>
        <end position="40"/>
    </location>
</feature>
<feature type="compositionally biased region" description="Acidic residues" evidence="3">
    <location>
        <begin position="376"/>
        <end position="409"/>
    </location>
</feature>
<organism>
    <name type="scientific">Caenorhabditis elegans</name>
    <dbReference type="NCBI Taxonomy" id="6239"/>
    <lineage>
        <taxon>Eukaryota</taxon>
        <taxon>Metazoa</taxon>
        <taxon>Ecdysozoa</taxon>
        <taxon>Nematoda</taxon>
        <taxon>Chromadorea</taxon>
        <taxon>Rhabditida</taxon>
        <taxon>Rhabditina</taxon>
        <taxon>Rhabditomorpha</taxon>
        <taxon>Rhabditoidea</taxon>
        <taxon>Rhabditidae</taxon>
        <taxon>Peloderinae</taxon>
        <taxon>Caenorhabditis</taxon>
    </lineage>
</organism>
<sequence>MSTTGHRAGVFKKPSKPHKSWKGKRTKGEITSENRGREGVKQLTRSAHSTHRTISKDARRNQLKMARDQKMADAMERRRTSNAPCLVTVVSLGVGARPTEFIKKLATCDETIIQTTSPSTIDFAIPRFKSRVSFLTPDKDNVDGVLDAIRASDVLCFLWPMSAELSEWDEQLLTIIKANGLPTIVSVVPGLGSIANHKKKEDVRKGIEFIISKWSMSNAGVMPADSVTDNLQLLRILNETKKKPLTLQARHSYMLVENLECSDKTGETCTLVAQGYLRGPEWNANNLVHLPGFGDFQISKIESTVDPHPLKAHNKTPEAQIIAKSDDKRQNTETEITPDSMDGEQTWPTREELEEADKELRRVPKGTSSYQAAWILDDEDDEDEEDSDEDMDDSDNEEVEDDSEEEEPMDDLKSEAGETTASEMMFDDGIDEDINMAEVEKYRKERENAQWPDEVDTPMDMPARIAFQKYRGLKSFRTSTWDPKENLPLDYARIFQFANYRNTKKNVMSKIGGNDVDADSVADKKFNGAFASVFIENVPVAVLEAYKDAKNLVLFQLLPHEHKMSVLNMVLKKHPSCTIPITSDQNQKFIFYVGFRQFEANAVFSSNTPGDKFKLERFMPTEKTFVATVYAPITFNPATVLCFRQDDKGRQELVATGSILDSNPDRIVLKRTVLAGHPYKINRRAVVVRYMFFNREDIEWFKPVELYTPSGRRGHIKEAVGTHGNMKCRFDQQLNAQDSVMLNLYKRVFPVWNYSIFNRSLNPSRFVERSRVESISLVNEDAMEE</sequence>
<reference key="1">
    <citation type="journal article" date="1998" name="Science">
        <title>Genome sequence of the nematode C. elegans: a platform for investigating biology.</title>
        <authorList>
            <consortium name="The C. elegans sequencing consortium"/>
        </authorList>
    </citation>
    <scope>NUCLEOTIDE SEQUENCE [LARGE SCALE GENOMIC DNA]</scope>
    <source>
        <strain>Bristol N2</strain>
    </source>
</reference>
<protein>
    <recommendedName>
        <fullName>Pre-rRNA-processing protein TSR1 homolog</fullName>
    </recommendedName>
</protein>
<gene>
    <name type="primary">tag-151</name>
    <name type="ORF">F10G7.1</name>
</gene>
<evidence type="ECO:0000250" key="1"/>
<evidence type="ECO:0000255" key="2">
    <source>
        <dbReference type="PROSITE-ProRule" id="PRU01051"/>
    </source>
</evidence>
<evidence type="ECO:0000256" key="3">
    <source>
        <dbReference type="SAM" id="MobiDB-lite"/>
    </source>
</evidence>
<evidence type="ECO:0000305" key="4"/>
<keyword id="KW-0539">Nucleus</keyword>
<keyword id="KW-1185">Reference proteome</keyword>
<keyword id="KW-0690">Ribosome biogenesis</keyword>
<proteinExistence type="inferred from homology"/>
<name>TSR1_CAEEL</name>
<dbReference type="EMBL" id="FO081114">
    <property type="protein sequence ID" value="CCD69203.1"/>
    <property type="molecule type" value="Genomic_DNA"/>
</dbReference>
<dbReference type="PIR" id="C88131">
    <property type="entry name" value="C88131"/>
</dbReference>
<dbReference type="RefSeq" id="NP_494840.1">
    <property type="nucleotide sequence ID" value="NM_062439.9"/>
</dbReference>
<dbReference type="SMR" id="Q19329"/>
<dbReference type="BioGRID" id="39166">
    <property type="interactions" value="4"/>
</dbReference>
<dbReference type="FunCoup" id="Q19329">
    <property type="interactions" value="2695"/>
</dbReference>
<dbReference type="STRING" id="6239.F10G7.1.1"/>
<dbReference type="PaxDb" id="6239-F10G7.1.2"/>
<dbReference type="PeptideAtlas" id="Q19329"/>
<dbReference type="EnsemblMetazoa" id="F10G7.1.1">
    <property type="protein sequence ID" value="F10G7.1.1"/>
    <property type="gene ID" value="WBGene00006497"/>
</dbReference>
<dbReference type="EnsemblMetazoa" id="F10G7.1.2">
    <property type="protein sequence ID" value="F10G7.1.2"/>
    <property type="gene ID" value="WBGene00006497"/>
</dbReference>
<dbReference type="GeneID" id="173812"/>
<dbReference type="KEGG" id="cel:CELE_F10G7.1"/>
<dbReference type="UCSC" id="F10G7.1.2">
    <property type="organism name" value="c. elegans"/>
</dbReference>
<dbReference type="AGR" id="WB:WBGene00006497"/>
<dbReference type="CTD" id="173812"/>
<dbReference type="WormBase" id="F10G7.1">
    <property type="protein sequence ID" value="CE02624"/>
    <property type="gene ID" value="WBGene00006497"/>
    <property type="gene designation" value="tag-151"/>
</dbReference>
<dbReference type="eggNOG" id="KOG1980">
    <property type="taxonomic scope" value="Eukaryota"/>
</dbReference>
<dbReference type="GeneTree" id="ENSGT00940000153195"/>
<dbReference type="HOGENOM" id="CLU_009858_1_0_1"/>
<dbReference type="InParanoid" id="Q19329"/>
<dbReference type="OMA" id="MNLPRFK"/>
<dbReference type="OrthoDB" id="119302at2759"/>
<dbReference type="PhylomeDB" id="Q19329"/>
<dbReference type="PRO" id="PR:Q19329"/>
<dbReference type="Proteomes" id="UP000001940">
    <property type="component" value="Chromosome II"/>
</dbReference>
<dbReference type="Bgee" id="WBGene00006497">
    <property type="expression patterns" value="Expressed in larva and 4 other cell types or tissues"/>
</dbReference>
<dbReference type="GO" id="GO:0005730">
    <property type="term" value="C:nucleolus"/>
    <property type="evidence" value="ECO:0000250"/>
    <property type="project" value="UniProtKB"/>
</dbReference>
<dbReference type="GO" id="GO:0005525">
    <property type="term" value="F:GTP binding"/>
    <property type="evidence" value="ECO:0000318"/>
    <property type="project" value="GO_Central"/>
</dbReference>
<dbReference type="GO" id="GO:0003924">
    <property type="term" value="F:GTPase activity"/>
    <property type="evidence" value="ECO:0000318"/>
    <property type="project" value="GO_Central"/>
</dbReference>
<dbReference type="GO" id="GO:0034511">
    <property type="term" value="F:U3 snoRNA binding"/>
    <property type="evidence" value="ECO:0000318"/>
    <property type="project" value="GO_Central"/>
</dbReference>
<dbReference type="GO" id="GO:0000479">
    <property type="term" value="P:endonucleolytic cleavage of tricistronic rRNA transcript (SSU-rRNA, 5.8S rRNA, LSU-rRNA)"/>
    <property type="evidence" value="ECO:0000318"/>
    <property type="project" value="GO_Central"/>
</dbReference>
<dbReference type="GO" id="GO:0000462">
    <property type="term" value="P:maturation of SSU-rRNA from tricistronic rRNA transcript (SSU-rRNA, 5.8S rRNA, LSU-rRNA)"/>
    <property type="evidence" value="ECO:0000318"/>
    <property type="project" value="GO_Central"/>
</dbReference>
<dbReference type="InterPro" id="IPR012948">
    <property type="entry name" value="AARP2CN"/>
</dbReference>
<dbReference type="InterPro" id="IPR039761">
    <property type="entry name" value="Bms1/Tsr1"/>
</dbReference>
<dbReference type="InterPro" id="IPR007034">
    <property type="entry name" value="BMS1_TSR1_C"/>
</dbReference>
<dbReference type="InterPro" id="IPR030387">
    <property type="entry name" value="G_Bms1/Tsr1_dom"/>
</dbReference>
<dbReference type="PANTHER" id="PTHR12858:SF1">
    <property type="entry name" value="PRE-RRNA-PROCESSING PROTEIN TSR1 HOMOLOG"/>
    <property type="match status" value="1"/>
</dbReference>
<dbReference type="PANTHER" id="PTHR12858">
    <property type="entry name" value="RIBOSOME BIOGENESIS PROTEIN"/>
    <property type="match status" value="1"/>
</dbReference>
<dbReference type="Pfam" id="PF08142">
    <property type="entry name" value="AARP2CN"/>
    <property type="match status" value="1"/>
</dbReference>
<dbReference type="Pfam" id="PF04950">
    <property type="entry name" value="RIBIOP_C"/>
    <property type="match status" value="1"/>
</dbReference>
<dbReference type="Pfam" id="PF22298">
    <property type="entry name" value="Tsr1_G-like"/>
    <property type="match status" value="1"/>
</dbReference>
<dbReference type="SMART" id="SM00785">
    <property type="entry name" value="AARP2CN"/>
    <property type="match status" value="1"/>
</dbReference>
<dbReference type="SMART" id="SM01362">
    <property type="entry name" value="DUF663"/>
    <property type="match status" value="1"/>
</dbReference>
<dbReference type="PROSITE" id="PS51714">
    <property type="entry name" value="G_BMS1"/>
    <property type="match status" value="1"/>
</dbReference>